<accession>O60488</accession>
<accession>D3DUY2</accession>
<accession>O60848</accession>
<accession>O60849</accession>
<accession>Q5JWV8</accession>
<reference key="1">
    <citation type="journal article" date="1998" name="Genomics">
        <title>Cloning, expression, and chromosomal localization of human long-chain fatty acid-CoA ligase 4 (FACL4).</title>
        <authorList>
            <person name="Cao Y."/>
            <person name="Traer E."/>
            <person name="Zimmerman G.A."/>
            <person name="McIntyre T.M."/>
            <person name="Prescott S.M."/>
        </authorList>
    </citation>
    <scope>NUCLEOTIDE SEQUENCE [MRNA] (ISOFORM SHORT)</scope>
</reference>
<reference key="2">
    <citation type="journal article" date="1998" name="Genomics">
        <title>FACL4, a new gene encoding long-chain acyl-CoA synthetase 4, is deleted in a family with Alport syndrome, elliptocytosis, and mental retardation.</title>
        <authorList>
            <person name="Piccini M."/>
            <person name="Vitelli F."/>
            <person name="Bruttini M."/>
            <person name="Pober B.R."/>
            <person name="Jonsson J.J."/>
            <person name="Villanova M."/>
            <person name="Zollo M."/>
            <person name="Borsani G."/>
            <person name="Ballabio A."/>
            <person name="Renieri A."/>
        </authorList>
    </citation>
    <scope>NUCLEOTIDE SEQUENCE [MRNA] (ISOFORMS LONG AND SHORT)</scope>
    <scope>INVOLVEMENT IN ATS-MR</scope>
    <source>
        <tissue>Placenta</tissue>
        <tissue>Retina</tissue>
    </source>
</reference>
<reference key="3">
    <citation type="journal article" date="2004" name="Nat. Genet.">
        <title>Complete sequencing and characterization of 21,243 full-length human cDNAs.</title>
        <authorList>
            <person name="Ota T."/>
            <person name="Suzuki Y."/>
            <person name="Nishikawa T."/>
            <person name="Otsuki T."/>
            <person name="Sugiyama T."/>
            <person name="Irie R."/>
            <person name="Wakamatsu A."/>
            <person name="Hayashi K."/>
            <person name="Sato H."/>
            <person name="Nagai K."/>
            <person name="Kimura K."/>
            <person name="Makita H."/>
            <person name="Sekine M."/>
            <person name="Obayashi M."/>
            <person name="Nishi T."/>
            <person name="Shibahara T."/>
            <person name="Tanaka T."/>
            <person name="Ishii S."/>
            <person name="Yamamoto J."/>
            <person name="Saito K."/>
            <person name="Kawai Y."/>
            <person name="Isono Y."/>
            <person name="Nakamura Y."/>
            <person name="Nagahari K."/>
            <person name="Murakami K."/>
            <person name="Yasuda T."/>
            <person name="Iwayanagi T."/>
            <person name="Wagatsuma M."/>
            <person name="Shiratori A."/>
            <person name="Sudo H."/>
            <person name="Hosoiri T."/>
            <person name="Kaku Y."/>
            <person name="Kodaira H."/>
            <person name="Kondo H."/>
            <person name="Sugawara M."/>
            <person name="Takahashi M."/>
            <person name="Kanda K."/>
            <person name="Yokoi T."/>
            <person name="Furuya T."/>
            <person name="Kikkawa E."/>
            <person name="Omura Y."/>
            <person name="Abe K."/>
            <person name="Kamihara K."/>
            <person name="Katsuta N."/>
            <person name="Sato K."/>
            <person name="Tanikawa M."/>
            <person name="Yamazaki M."/>
            <person name="Ninomiya K."/>
            <person name="Ishibashi T."/>
            <person name="Yamashita H."/>
            <person name="Murakawa K."/>
            <person name="Fujimori K."/>
            <person name="Tanai H."/>
            <person name="Kimata M."/>
            <person name="Watanabe M."/>
            <person name="Hiraoka S."/>
            <person name="Chiba Y."/>
            <person name="Ishida S."/>
            <person name="Ono Y."/>
            <person name="Takiguchi S."/>
            <person name="Watanabe S."/>
            <person name="Yosida M."/>
            <person name="Hotuta T."/>
            <person name="Kusano J."/>
            <person name="Kanehori K."/>
            <person name="Takahashi-Fujii A."/>
            <person name="Hara H."/>
            <person name="Tanase T.-O."/>
            <person name="Nomura Y."/>
            <person name="Togiya S."/>
            <person name="Komai F."/>
            <person name="Hara R."/>
            <person name="Takeuchi K."/>
            <person name="Arita M."/>
            <person name="Imose N."/>
            <person name="Musashino K."/>
            <person name="Yuuki H."/>
            <person name="Oshima A."/>
            <person name="Sasaki N."/>
            <person name="Aotsuka S."/>
            <person name="Yoshikawa Y."/>
            <person name="Matsunawa H."/>
            <person name="Ichihara T."/>
            <person name="Shiohata N."/>
            <person name="Sano S."/>
            <person name="Moriya S."/>
            <person name="Momiyama H."/>
            <person name="Satoh N."/>
            <person name="Takami S."/>
            <person name="Terashima Y."/>
            <person name="Suzuki O."/>
            <person name="Nakagawa S."/>
            <person name="Senoh A."/>
            <person name="Mizoguchi H."/>
            <person name="Goto Y."/>
            <person name="Shimizu F."/>
            <person name="Wakebe H."/>
            <person name="Hishigaki H."/>
            <person name="Watanabe T."/>
            <person name="Sugiyama A."/>
            <person name="Takemoto M."/>
            <person name="Kawakami B."/>
            <person name="Yamazaki M."/>
            <person name="Watanabe K."/>
            <person name="Kumagai A."/>
            <person name="Itakura S."/>
            <person name="Fukuzumi Y."/>
            <person name="Fujimori Y."/>
            <person name="Komiyama M."/>
            <person name="Tashiro H."/>
            <person name="Tanigami A."/>
            <person name="Fujiwara T."/>
            <person name="Ono T."/>
            <person name="Yamada K."/>
            <person name="Fujii Y."/>
            <person name="Ozaki K."/>
            <person name="Hirao M."/>
            <person name="Ohmori Y."/>
            <person name="Kawabata A."/>
            <person name="Hikiji T."/>
            <person name="Kobatake N."/>
            <person name="Inagaki H."/>
            <person name="Ikema Y."/>
            <person name="Okamoto S."/>
            <person name="Okitani R."/>
            <person name="Kawakami T."/>
            <person name="Noguchi S."/>
            <person name="Itoh T."/>
            <person name="Shigeta K."/>
            <person name="Senba T."/>
            <person name="Matsumura K."/>
            <person name="Nakajima Y."/>
            <person name="Mizuno T."/>
            <person name="Morinaga M."/>
            <person name="Sasaki M."/>
            <person name="Togashi T."/>
            <person name="Oyama M."/>
            <person name="Hata H."/>
            <person name="Watanabe M."/>
            <person name="Komatsu T."/>
            <person name="Mizushima-Sugano J."/>
            <person name="Satoh T."/>
            <person name="Shirai Y."/>
            <person name="Takahashi Y."/>
            <person name="Nakagawa K."/>
            <person name="Okumura K."/>
            <person name="Nagase T."/>
            <person name="Nomura N."/>
            <person name="Kikuchi H."/>
            <person name="Masuho Y."/>
            <person name="Yamashita R."/>
            <person name="Nakai K."/>
            <person name="Yada T."/>
            <person name="Nakamura Y."/>
            <person name="Ohara O."/>
            <person name="Isogai T."/>
            <person name="Sugano S."/>
        </authorList>
    </citation>
    <scope>NUCLEOTIDE SEQUENCE [LARGE SCALE MRNA] (ISOFORM SHORT)</scope>
    <source>
        <tissue>Stomach</tissue>
    </source>
</reference>
<reference key="4">
    <citation type="submission" date="2005-09" db="EMBL/GenBank/DDBJ databases">
        <authorList>
            <person name="Mural R.J."/>
            <person name="Istrail S."/>
            <person name="Sutton G.G."/>
            <person name="Florea L."/>
            <person name="Halpern A.L."/>
            <person name="Mobarry C.M."/>
            <person name="Lippert R."/>
            <person name="Walenz B."/>
            <person name="Shatkay H."/>
            <person name="Dew I."/>
            <person name="Miller J.R."/>
            <person name="Flanigan M.J."/>
            <person name="Edwards N.J."/>
            <person name="Bolanos R."/>
            <person name="Fasulo D."/>
            <person name="Halldorsson B.V."/>
            <person name="Hannenhalli S."/>
            <person name="Turner R."/>
            <person name="Yooseph S."/>
            <person name="Lu F."/>
            <person name="Nusskern D.R."/>
            <person name="Shue B.C."/>
            <person name="Zheng X.H."/>
            <person name="Zhong F."/>
            <person name="Delcher A.L."/>
            <person name="Huson D.H."/>
            <person name="Kravitz S.A."/>
            <person name="Mouchard L."/>
            <person name="Reinert K."/>
            <person name="Remington K.A."/>
            <person name="Clark A.G."/>
            <person name="Waterman M.S."/>
            <person name="Eichler E.E."/>
            <person name="Adams M.D."/>
            <person name="Hunkapiller M.W."/>
            <person name="Myers E.W."/>
            <person name="Venter J.C."/>
        </authorList>
    </citation>
    <scope>NUCLEOTIDE SEQUENCE [LARGE SCALE GENOMIC DNA]</scope>
</reference>
<reference key="5">
    <citation type="journal article" date="2004" name="Genome Res.">
        <title>The status, quality, and expansion of the NIH full-length cDNA project: the Mammalian Gene Collection (MGC).</title>
        <authorList>
            <consortium name="The MGC Project Team"/>
        </authorList>
    </citation>
    <scope>NUCLEOTIDE SEQUENCE [LARGE SCALE MRNA] (ISOFORM SHORT)</scope>
    <source>
        <tissue>Testis</tissue>
    </source>
</reference>
<reference key="6">
    <citation type="journal article" date="2008" name="Proc. Natl. Acad. Sci. U.S.A.">
        <title>A quantitative atlas of mitotic phosphorylation.</title>
        <authorList>
            <person name="Dephoure N."/>
            <person name="Zhou C."/>
            <person name="Villen J."/>
            <person name="Beausoleil S.A."/>
            <person name="Bakalarski C.E."/>
            <person name="Elledge S.J."/>
            <person name="Gygi S.P."/>
        </authorList>
    </citation>
    <scope>IDENTIFICATION BY MASS SPECTROMETRY [LARGE SCALE ANALYSIS]</scope>
    <source>
        <tissue>Cervix carcinoma</tissue>
    </source>
</reference>
<reference key="7">
    <citation type="journal article" date="2011" name="BMC Syst. Biol.">
        <title>Initial characterization of the human central proteome.</title>
        <authorList>
            <person name="Burkard T.R."/>
            <person name="Planyavsky M."/>
            <person name="Kaupe I."/>
            <person name="Breitwieser F.P."/>
            <person name="Buerckstuemmer T."/>
            <person name="Bennett K.L."/>
            <person name="Superti-Furga G."/>
            <person name="Colinge J."/>
        </authorList>
    </citation>
    <scope>IDENTIFICATION BY MASS SPECTROMETRY [LARGE SCALE ANALYSIS]</scope>
</reference>
<reference key="8">
    <citation type="journal article" date="2011" name="J. Lipid Res.">
        <title>Long-chain acyl-CoA synthetase 4 modulates prostaglandin E(2) release from human arterial smooth muscle cells.</title>
        <authorList>
            <person name="Golej D.L."/>
            <person name="Askari B."/>
            <person name="Kramer F."/>
            <person name="Barnhart S."/>
            <person name="Vivekanandan-Giri A."/>
            <person name="Pennathur S."/>
            <person name="Bornfeldt K.E."/>
        </authorList>
    </citation>
    <scope>CATALYTIC ACTIVITY</scope>
    <scope>FUNCTION</scope>
    <scope>ACTIVITY REGULATION</scope>
</reference>
<reference key="9">
    <citation type="journal article" date="2012" name="Mol. Cell">
        <title>The Sjogren-Larsson syndrome gene encodes a hexadecenal dehydrogenase of the sphingosine 1-phosphate degradation pathway.</title>
        <authorList>
            <person name="Nakahara K."/>
            <person name="Ohkuni A."/>
            <person name="Kitamura T."/>
            <person name="Abe K."/>
            <person name="Naganuma T."/>
            <person name="Ohno Y."/>
            <person name="Zoeller R.A."/>
            <person name="Kihara A."/>
        </authorList>
    </citation>
    <scope>FUNCTION</scope>
    <scope>CATALYTIC ACTIVITY</scope>
</reference>
<reference key="10">
    <citation type="journal article" date="2013" name="Biochem. Biophys. Res. Commun.">
        <title>Identification of acyl-CoA synthetases involved in the mammalian sphingosine 1-phosphate metabolic pathway.</title>
        <authorList>
            <person name="Ohkuni A."/>
            <person name="Ohno Y."/>
            <person name="Kihara A."/>
        </authorList>
    </citation>
    <scope>CATALYTIC ACTIVITY</scope>
    <scope>FUNCTION</scope>
    <scope>SUBCELLULAR LOCATION</scope>
</reference>
<reference key="11">
    <citation type="journal article" date="2013" name="J. Proteome Res.">
        <title>Toward a comprehensive characterization of a human cancer cell phosphoproteome.</title>
        <authorList>
            <person name="Zhou H."/>
            <person name="Di Palma S."/>
            <person name="Preisinger C."/>
            <person name="Peng M."/>
            <person name="Polat A.N."/>
            <person name="Heck A.J."/>
            <person name="Mohammed S."/>
        </authorList>
    </citation>
    <scope>PHOSPHORYLATION [LARGE SCALE ANALYSIS] AT SER-447</scope>
    <scope>IDENTIFICATION BY MASS SPECTROMETRY [LARGE SCALE ANALYSIS]</scope>
    <source>
        <tissue>Erythroleukemia</tissue>
    </source>
</reference>
<reference key="12">
    <citation type="journal article" date="2015" name="Proteomics">
        <title>N-terminome analysis of the human mitochondrial proteome.</title>
        <authorList>
            <person name="Vaca Jacome A.S."/>
            <person name="Rabilloud T."/>
            <person name="Schaeffer-Reiss C."/>
            <person name="Rompais M."/>
            <person name="Ayoub D."/>
            <person name="Lane L."/>
            <person name="Bairoch A."/>
            <person name="Van Dorsselaer A."/>
            <person name="Carapito C."/>
        </authorList>
    </citation>
    <scope>IDENTIFICATION BY MASS SPECTROMETRY [LARGE SCALE ANALYSIS]</scope>
</reference>
<reference key="13">
    <citation type="journal article" date="2002" name="Nat. Genet.">
        <title>FACL4, encoding fatty acid-CoA ligase 4, is mutated in nonspecific X-linked mental retardation.</title>
        <authorList>
            <person name="Meloni I."/>
            <person name="Muscettola M."/>
            <person name="Raynaud M."/>
            <person name="Longo I."/>
            <person name="Bruttini M."/>
            <person name="Moizard M.-P."/>
            <person name="Gomot M."/>
            <person name="Chelly J."/>
            <person name="des Portes V."/>
            <person name="Fryns J.-P."/>
            <person name="Ropers H.-H."/>
            <person name="Magi B."/>
            <person name="Bellan C."/>
            <person name="Volpi N."/>
            <person name="Yntema H.G."/>
            <person name="Lewis S.E."/>
            <person name="Schaffer J.E."/>
            <person name="Renieri A."/>
        </authorList>
    </citation>
    <scope>VARIANT XLID63 SER-570</scope>
</reference>
<reference key="14">
    <citation type="journal article" date="2006" name="Science">
        <title>The consensus coding sequences of human breast and colorectal cancers.</title>
        <authorList>
            <person name="Sjoeblom T."/>
            <person name="Jones S."/>
            <person name="Wood L.D."/>
            <person name="Parsons D.W."/>
            <person name="Lin J."/>
            <person name="Barber T.D."/>
            <person name="Mandelker D."/>
            <person name="Leary R.J."/>
            <person name="Ptak J."/>
            <person name="Silliman N."/>
            <person name="Szabo S."/>
            <person name="Buckhaults P."/>
            <person name="Farrell C."/>
            <person name="Meeh P."/>
            <person name="Markowitz S.D."/>
            <person name="Willis J."/>
            <person name="Dawson D."/>
            <person name="Willson J.K.V."/>
            <person name="Gazdar A.F."/>
            <person name="Hartigan J."/>
            <person name="Wu L."/>
            <person name="Liu C."/>
            <person name="Parmigiani G."/>
            <person name="Park B.H."/>
            <person name="Bachman K.E."/>
            <person name="Papadopoulos N."/>
            <person name="Vogelstein B."/>
            <person name="Kinzler K.W."/>
            <person name="Velculescu V.E."/>
        </authorList>
    </citation>
    <scope>VARIANT [LARGE SCALE ANALYSIS] CYS-133</scope>
</reference>
<reference key="15">
    <citation type="journal article" date="2018" name="Am. J. Hum. Genet.">
        <title>De Novo Truncating Mutations in WASF1 Cause Intellectual Disability with Seizures.</title>
        <authorList>
            <consortium name="NIHR BioResource"/>
            <consortium name="Care4Rare Canada Consortium"/>
            <person name="Ito Y."/>
            <person name="Carss K.J."/>
            <person name="Duarte S.T."/>
            <person name="Hartley T."/>
            <person name="Keren B."/>
            <person name="Kurian M.A."/>
            <person name="Marey I."/>
            <person name="Charles P."/>
            <person name="Mendonca C."/>
            <person name="Nava C."/>
            <person name="Pfundt R."/>
            <person name="Sanchis-Juan A."/>
            <person name="van Bokhoven H."/>
            <person name="van Essen A."/>
            <person name="van Ravenswaaij-Arts C."/>
            <person name="Boycott K.M."/>
            <person name="Kernohan K.D."/>
            <person name="Dyack S."/>
            <person name="Raymond F.L."/>
        </authorList>
    </citation>
    <scope>VARIANT ASN-379</scope>
</reference>
<comment type="function">
    <text evidence="2 6 7 8">Catalyzes the conversion of long-chain fatty acids to their active form acyl-CoA for both synthesis of cellular lipids, and degradation via beta-oxidation (PubMed:21242590, PubMed:22633490, PubMed:24269233). Preferentially activates arachidonate and eicosapentaenoate as substrates (PubMed:21242590). Preferentially activates 8,9-EET &gt; 14,15-EET &gt; 5,6-EET &gt; 11,12-EET. Modulates glucose-stimulated insulin secretion by regulating the levels of unesterified EETs (By similarity). Modulates prostaglandin E2 secretion (PubMed:21242590).</text>
</comment>
<comment type="catalytic activity">
    <reaction evidence="6 7 8">
        <text>a long-chain fatty acid + ATP + CoA = a long-chain fatty acyl-CoA + AMP + diphosphate</text>
        <dbReference type="Rhea" id="RHEA:15421"/>
        <dbReference type="ChEBI" id="CHEBI:30616"/>
        <dbReference type="ChEBI" id="CHEBI:33019"/>
        <dbReference type="ChEBI" id="CHEBI:57287"/>
        <dbReference type="ChEBI" id="CHEBI:57560"/>
        <dbReference type="ChEBI" id="CHEBI:83139"/>
        <dbReference type="ChEBI" id="CHEBI:456215"/>
        <dbReference type="EC" id="6.2.1.3"/>
    </reaction>
    <physiologicalReaction direction="left-to-right" evidence="6 7 8">
        <dbReference type="Rhea" id="RHEA:15422"/>
    </physiologicalReaction>
</comment>
<comment type="catalytic activity">
    <reaction evidence="6">
        <text>(5Z,8Z,11Z,14Z)-eicosatetraenoate + ATP + CoA = (5Z,8Z,11Z,14Z)-eicosatetraenoyl-CoA + AMP + diphosphate</text>
        <dbReference type="Rhea" id="RHEA:19713"/>
        <dbReference type="ChEBI" id="CHEBI:30616"/>
        <dbReference type="ChEBI" id="CHEBI:32395"/>
        <dbReference type="ChEBI" id="CHEBI:33019"/>
        <dbReference type="ChEBI" id="CHEBI:57287"/>
        <dbReference type="ChEBI" id="CHEBI:57368"/>
        <dbReference type="ChEBI" id="CHEBI:456215"/>
        <dbReference type="EC" id="6.2.1.15"/>
    </reaction>
    <physiologicalReaction direction="left-to-right" evidence="6">
        <dbReference type="Rhea" id="RHEA:19714"/>
    </physiologicalReaction>
</comment>
<comment type="catalytic activity">
    <reaction evidence="6 8">
        <text>hexadecanoate + ATP + CoA = hexadecanoyl-CoA + AMP + diphosphate</text>
        <dbReference type="Rhea" id="RHEA:30751"/>
        <dbReference type="ChEBI" id="CHEBI:7896"/>
        <dbReference type="ChEBI" id="CHEBI:30616"/>
        <dbReference type="ChEBI" id="CHEBI:33019"/>
        <dbReference type="ChEBI" id="CHEBI:57287"/>
        <dbReference type="ChEBI" id="CHEBI:57379"/>
        <dbReference type="ChEBI" id="CHEBI:456215"/>
    </reaction>
    <physiologicalReaction direction="left-to-right" evidence="6">
        <dbReference type="Rhea" id="RHEA:30752"/>
    </physiologicalReaction>
</comment>
<comment type="catalytic activity">
    <reaction evidence="7 8">
        <text>(E)-hexadec-2-enoate + ATP + CoA = (2E)-hexadecenoyl-CoA + AMP + diphosphate</text>
        <dbReference type="Rhea" id="RHEA:36139"/>
        <dbReference type="ChEBI" id="CHEBI:30616"/>
        <dbReference type="ChEBI" id="CHEBI:33019"/>
        <dbReference type="ChEBI" id="CHEBI:57287"/>
        <dbReference type="ChEBI" id="CHEBI:61526"/>
        <dbReference type="ChEBI" id="CHEBI:72745"/>
        <dbReference type="ChEBI" id="CHEBI:456215"/>
    </reaction>
    <physiologicalReaction direction="left-to-right" evidence="7">
        <dbReference type="Rhea" id="RHEA:36140"/>
    </physiologicalReaction>
</comment>
<comment type="catalytic activity">
    <reaction evidence="2">
        <text>15-hydroxy-(5Z,8Z,11Z,13E)-eicosatetraenoate + ATP + CoA = 15-hydroxy-(5Z,8Z,11Z,13E)-eicosatetraenoyl-CoA + AMP + diphosphate</text>
        <dbReference type="Rhea" id="RHEA:52116"/>
        <dbReference type="ChEBI" id="CHEBI:30616"/>
        <dbReference type="ChEBI" id="CHEBI:33019"/>
        <dbReference type="ChEBI" id="CHEBI:57287"/>
        <dbReference type="ChEBI" id="CHEBI:78832"/>
        <dbReference type="ChEBI" id="CHEBI:136409"/>
        <dbReference type="ChEBI" id="CHEBI:456215"/>
    </reaction>
    <physiologicalReaction direction="left-to-right" evidence="2">
        <dbReference type="Rhea" id="RHEA:52117"/>
    </physiologicalReaction>
</comment>
<comment type="catalytic activity">
    <reaction evidence="2">
        <text>12-hydroxy-(5Z,8Z,10E,14Z)-eicosatetraenoate + ATP + CoA = 12-hydroxy-(5Z,8Z,10E,14Z)-eicosatetraenoyl-CoA + AMP + diphosphate</text>
        <dbReference type="Rhea" id="RHEA:52112"/>
        <dbReference type="ChEBI" id="CHEBI:30616"/>
        <dbReference type="ChEBI" id="CHEBI:33019"/>
        <dbReference type="ChEBI" id="CHEBI:57287"/>
        <dbReference type="ChEBI" id="CHEBI:90718"/>
        <dbReference type="ChEBI" id="CHEBI:136408"/>
        <dbReference type="ChEBI" id="CHEBI:456215"/>
    </reaction>
    <physiologicalReaction direction="left-to-right" evidence="2">
        <dbReference type="Rhea" id="RHEA:52113"/>
    </physiologicalReaction>
</comment>
<comment type="catalytic activity">
    <reaction evidence="2">
        <text>5-hydroxy-(6E,8Z,11Z,14Z)-eicosatetraenoate + ATP + CoA = 5-hydroxy-(6E,8Z,11Z,14Z)-eicosatetraenoyl-CoA + AMP + diphosphate</text>
        <dbReference type="Rhea" id="RHEA:52108"/>
        <dbReference type="ChEBI" id="CHEBI:30616"/>
        <dbReference type="ChEBI" id="CHEBI:33019"/>
        <dbReference type="ChEBI" id="CHEBI:57287"/>
        <dbReference type="ChEBI" id="CHEBI:65341"/>
        <dbReference type="ChEBI" id="CHEBI:136407"/>
        <dbReference type="ChEBI" id="CHEBI:456215"/>
    </reaction>
    <physiologicalReaction direction="left-to-right" evidence="2">
        <dbReference type="Rhea" id="RHEA:52109"/>
    </physiologicalReaction>
</comment>
<comment type="catalytic activity">
    <reaction evidence="2">
        <text>5,6-epoxy-(8Z,11Z,14Z)-eicosatrienoate + ATP + CoA = 5,6-epoxy-(8Z,11Z,14Z)-eicosatrienoyl-CoA + AMP + diphosphate</text>
        <dbReference type="Rhea" id="RHEA:52088"/>
        <dbReference type="ChEBI" id="CHEBI:30616"/>
        <dbReference type="ChEBI" id="CHEBI:33019"/>
        <dbReference type="ChEBI" id="CHEBI:57287"/>
        <dbReference type="ChEBI" id="CHEBI:131992"/>
        <dbReference type="ChEBI" id="CHEBI:136351"/>
        <dbReference type="ChEBI" id="CHEBI:456215"/>
    </reaction>
    <physiologicalReaction direction="left-to-right" evidence="2">
        <dbReference type="Rhea" id="RHEA:52089"/>
    </physiologicalReaction>
</comment>
<comment type="catalytic activity">
    <reaction evidence="2">
        <text>14,15-epoxy-(5Z,8Z,11Z)-eicosatrienoate + ATP + CoA = 14,15-epoxy-(5Z,8Z,11Z)-eicosatrienoyl-CoA + AMP + diphosphate</text>
        <dbReference type="Rhea" id="RHEA:52016"/>
        <dbReference type="ChEBI" id="CHEBI:30616"/>
        <dbReference type="ChEBI" id="CHEBI:33019"/>
        <dbReference type="ChEBI" id="CHEBI:57287"/>
        <dbReference type="ChEBI" id="CHEBI:84024"/>
        <dbReference type="ChEBI" id="CHEBI:136117"/>
        <dbReference type="ChEBI" id="CHEBI:456215"/>
    </reaction>
    <physiologicalReaction direction="left-to-right" evidence="2">
        <dbReference type="Rhea" id="RHEA:52017"/>
    </physiologicalReaction>
</comment>
<comment type="catalytic activity">
    <reaction evidence="2">
        <text>11,12-epoxy-(5Z,8Z,14Z)-eicosatrienoate + ATP + CoA = 11,12-epoxy-(5Z,8Z,14Z)-eicosatrienoyl-CoA + AMP + diphosphate</text>
        <dbReference type="Rhea" id="RHEA:52012"/>
        <dbReference type="ChEBI" id="CHEBI:30616"/>
        <dbReference type="ChEBI" id="CHEBI:33019"/>
        <dbReference type="ChEBI" id="CHEBI:57287"/>
        <dbReference type="ChEBI" id="CHEBI:76625"/>
        <dbReference type="ChEBI" id="CHEBI:136115"/>
        <dbReference type="ChEBI" id="CHEBI:456215"/>
    </reaction>
    <physiologicalReaction direction="left-to-right" evidence="2">
        <dbReference type="Rhea" id="RHEA:52013"/>
    </physiologicalReaction>
</comment>
<comment type="catalytic activity">
    <reaction evidence="2">
        <text>8,9-epoxy-(5Z,11Z,14Z)-eicosatrienoate + ATP + CoA = 8,9-epoxy-(5Z,11Z,14Z)-eicosatrienoyl-CoA + AMP + diphosphate</text>
        <dbReference type="Rhea" id="RHEA:52008"/>
        <dbReference type="ChEBI" id="CHEBI:30616"/>
        <dbReference type="ChEBI" id="CHEBI:33019"/>
        <dbReference type="ChEBI" id="CHEBI:57287"/>
        <dbReference type="ChEBI" id="CHEBI:84025"/>
        <dbReference type="ChEBI" id="CHEBI:136107"/>
        <dbReference type="ChEBI" id="CHEBI:456215"/>
    </reaction>
    <physiologicalReaction direction="left-to-right" evidence="2">
        <dbReference type="Rhea" id="RHEA:52009"/>
    </physiologicalReaction>
</comment>
<comment type="cofactor">
    <cofactor evidence="1">
        <name>Mg(2+)</name>
        <dbReference type="ChEBI" id="CHEBI:18420"/>
    </cofactor>
</comment>
<comment type="activity regulation">
    <text evidence="6">Both triacsin C and rosiglitazone inhibit arachidonoyl-CoA ligase activity.</text>
</comment>
<comment type="subcellular location">
    <subcellularLocation>
        <location evidence="1">Mitochondrion outer membrane</location>
        <topology evidence="1">Single-pass type III membrane protein</topology>
    </subcellularLocation>
    <subcellularLocation>
        <location evidence="1">Peroxisome membrane</location>
        <topology evidence="1">Single-pass type III membrane protein</topology>
    </subcellularLocation>
    <subcellularLocation>
        <location evidence="1">Microsome membrane</location>
        <topology evidence="1">Single-pass type III membrane protein</topology>
    </subcellularLocation>
    <subcellularLocation>
        <location evidence="8">Endoplasmic reticulum membrane</location>
        <topology evidence="1">Single-pass type III membrane protein</topology>
    </subcellularLocation>
    <subcellularLocation>
        <location evidence="8">Cell membrane</location>
    </subcellularLocation>
</comment>
<comment type="alternative products">
    <event type="alternative splicing"/>
    <isoform>
        <id>O60488-1</id>
        <name>Long</name>
        <sequence type="displayed"/>
    </isoform>
    <isoform>
        <id>O60488-2</id>
        <name>Short</name>
        <sequence type="described" ref="VSP_000238"/>
    </isoform>
</comment>
<comment type="disease" evidence="4">
    <disease id="DI-00734">
        <name>Intellectual developmental disorder, X-linked 63</name>
        <acronym>XLID63</acronym>
        <description>A disorder characterized by significantly below average general intellectual functioning associated with impairments in adaptive behavior and manifested during the developmental period. Intellectual deficiency is the only primary symptom of non-syndromic X-linked intellectual disability, while syndromic forms presents with associated physical, neurological and/or psychiatric manifestations.</description>
        <dbReference type="MIM" id="300387"/>
    </disease>
    <text>The disease is caused by variants affecting the gene represented in this entry.</text>
</comment>
<comment type="disease" evidence="10">
    <disease id="DI-01183">
        <name>AMME complex</name>
        <acronym>ATS-MR</acronym>
        <description>An X-linked contiguous gene deletion syndrome characterized by glomerulonephritis, sensorineural hearing loss, intellectual disability, midface hypoplasia and elliptocytosis.</description>
        <dbReference type="MIM" id="300194"/>
    </disease>
    <text>The gene represented in this entry may be involved in disease pathogenesis.</text>
</comment>
<comment type="similarity">
    <text evidence="15">Belongs to the ATP-dependent AMP-binding enzyme family.</text>
</comment>
<evidence type="ECO:0000250" key="1"/>
<evidence type="ECO:0000250" key="2">
    <source>
        <dbReference type="UniProtKB" id="O35547"/>
    </source>
</evidence>
<evidence type="ECO:0000255" key="3"/>
<evidence type="ECO:0000269" key="4">
    <source>
    </source>
</evidence>
<evidence type="ECO:0000269" key="5">
    <source>
    </source>
</evidence>
<evidence type="ECO:0000269" key="6">
    <source>
    </source>
</evidence>
<evidence type="ECO:0000269" key="7">
    <source>
    </source>
</evidence>
<evidence type="ECO:0000269" key="8">
    <source>
    </source>
</evidence>
<evidence type="ECO:0000269" key="9">
    <source>
    </source>
</evidence>
<evidence type="ECO:0000269" key="10">
    <source>
    </source>
</evidence>
<evidence type="ECO:0000303" key="11">
    <source>
    </source>
</evidence>
<evidence type="ECO:0000303" key="12">
    <source>
    </source>
</evidence>
<evidence type="ECO:0000303" key="13">
    <source>
    </source>
</evidence>
<evidence type="ECO:0000303" key="14">
    <source>
    </source>
</evidence>
<evidence type="ECO:0000305" key="15"/>
<evidence type="ECO:0007744" key="16">
    <source>
    </source>
</evidence>
<protein>
    <recommendedName>
        <fullName evidence="15">Long-chain-fatty-acid--CoA ligase 4</fullName>
        <ecNumber evidence="6 7 8">6.2.1.3</ecNumber>
    </recommendedName>
    <alternativeName>
        <fullName evidence="15">Arachidonate--CoA ligase</fullName>
        <ecNumber evidence="6">6.2.1.15</ecNumber>
    </alternativeName>
    <alternativeName>
        <fullName>Long-chain acyl-CoA synthetase 4</fullName>
        <shortName>LACS 4</shortName>
    </alternativeName>
</protein>
<keyword id="KW-0023">Alport syndrome</keyword>
<keyword id="KW-0025">Alternative splicing</keyword>
<keyword id="KW-0067">ATP-binding</keyword>
<keyword id="KW-1003">Cell membrane</keyword>
<keyword id="KW-0209">Deafness</keyword>
<keyword id="KW-0225">Disease variant</keyword>
<keyword id="KW-0250">Elliptocytosis</keyword>
<keyword id="KW-0256">Endoplasmic reticulum</keyword>
<keyword id="KW-0276">Fatty acid metabolism</keyword>
<keyword id="KW-0360">Hereditary hemolytic anemia</keyword>
<keyword id="KW-0991">Intellectual disability</keyword>
<keyword id="KW-0436">Ligase</keyword>
<keyword id="KW-0443">Lipid metabolism</keyword>
<keyword id="KW-0460">Magnesium</keyword>
<keyword id="KW-0472">Membrane</keyword>
<keyword id="KW-0492">Microsome</keyword>
<keyword id="KW-0496">Mitochondrion</keyword>
<keyword id="KW-1000">Mitochondrion outer membrane</keyword>
<keyword id="KW-0547">Nucleotide-binding</keyword>
<keyword id="KW-0576">Peroxisome</keyword>
<keyword id="KW-0597">Phosphoprotein</keyword>
<keyword id="KW-1267">Proteomics identification</keyword>
<keyword id="KW-1185">Reference proteome</keyword>
<keyword id="KW-0735">Signal-anchor</keyword>
<keyword id="KW-0812">Transmembrane</keyword>
<keyword id="KW-1133">Transmembrane helix</keyword>
<gene>
    <name type="primary">ACSL4</name>
    <name type="synonym">ACS4</name>
    <name type="synonym">FACL4</name>
    <name type="synonym">LACS4</name>
</gene>
<dbReference type="EC" id="6.2.1.3" evidence="6 7 8"/>
<dbReference type="EC" id="6.2.1.15" evidence="6"/>
<dbReference type="EMBL" id="AF030555">
    <property type="protein sequence ID" value="AAC17493.1"/>
    <property type="molecule type" value="mRNA"/>
</dbReference>
<dbReference type="EMBL" id="Y12777">
    <property type="protein sequence ID" value="CAA73314.1"/>
    <property type="molecule type" value="mRNA"/>
</dbReference>
<dbReference type="EMBL" id="Y13058">
    <property type="protein sequence ID" value="CAA73501.1"/>
    <property type="molecule type" value="mRNA"/>
</dbReference>
<dbReference type="EMBL" id="AK292070">
    <property type="protein sequence ID" value="BAF84759.1"/>
    <property type="molecule type" value="mRNA"/>
</dbReference>
<dbReference type="EMBL" id="CH471120">
    <property type="protein sequence ID" value="EAX02671.1"/>
    <property type="molecule type" value="Genomic_DNA"/>
</dbReference>
<dbReference type="EMBL" id="CH471120">
    <property type="protein sequence ID" value="EAX02672.1"/>
    <property type="molecule type" value="Genomic_DNA"/>
</dbReference>
<dbReference type="EMBL" id="CH471120">
    <property type="protein sequence ID" value="EAX02673.1"/>
    <property type="molecule type" value="Genomic_DNA"/>
</dbReference>
<dbReference type="EMBL" id="CH471120">
    <property type="protein sequence ID" value="EAX02674.1"/>
    <property type="molecule type" value="Genomic_DNA"/>
</dbReference>
<dbReference type="EMBL" id="BC034959">
    <property type="protein sequence ID" value="AAH34959.1"/>
    <property type="molecule type" value="mRNA"/>
</dbReference>
<dbReference type="CCDS" id="CCDS14548.1">
    <molecule id="O60488-1"/>
</dbReference>
<dbReference type="CCDS" id="CCDS14549.1">
    <molecule id="O60488-2"/>
</dbReference>
<dbReference type="RefSeq" id="NP_001305438.1">
    <molecule id="O60488-1"/>
    <property type="nucleotide sequence ID" value="NM_001318509.2"/>
</dbReference>
<dbReference type="RefSeq" id="NP_001305439.1">
    <molecule id="O60488-2"/>
    <property type="nucleotide sequence ID" value="NM_001318510.2"/>
</dbReference>
<dbReference type="RefSeq" id="NP_004449.1">
    <molecule id="O60488-2"/>
    <property type="nucleotide sequence ID" value="NM_004458.3"/>
</dbReference>
<dbReference type="RefSeq" id="NP_075266.1">
    <molecule id="O60488-1"/>
    <property type="nucleotide sequence ID" value="NM_022977.3"/>
</dbReference>
<dbReference type="RefSeq" id="XP_005262166.1">
    <molecule id="O60488-1"/>
    <property type="nucleotide sequence ID" value="XM_005262109.3"/>
</dbReference>
<dbReference type="RefSeq" id="XP_006724698.1">
    <molecule id="O60488-2"/>
    <property type="nucleotide sequence ID" value="XM_006724635.3"/>
</dbReference>
<dbReference type="RefSeq" id="XP_011529190.1">
    <molecule id="O60488-1"/>
    <property type="nucleotide sequence ID" value="XM_011530888.3"/>
</dbReference>
<dbReference type="RefSeq" id="XP_011529191.1">
    <molecule id="O60488-1"/>
    <property type="nucleotide sequence ID" value="XM_011530889.3"/>
</dbReference>
<dbReference type="RefSeq" id="XP_047297874.1">
    <molecule id="O60488-2"/>
    <property type="nucleotide sequence ID" value="XM_047441918.1"/>
</dbReference>
<dbReference type="RefSeq" id="XP_047297875.1">
    <molecule id="O60488-2"/>
    <property type="nucleotide sequence ID" value="XM_047441919.1"/>
</dbReference>
<dbReference type="RefSeq" id="XP_054182659.1">
    <molecule id="O60488-1"/>
    <property type="nucleotide sequence ID" value="XM_054326684.1"/>
</dbReference>
<dbReference type="RefSeq" id="XP_054182660.1">
    <molecule id="O60488-1"/>
    <property type="nucleotide sequence ID" value="XM_054326685.1"/>
</dbReference>
<dbReference type="RefSeq" id="XP_054182661.1">
    <molecule id="O60488-1"/>
    <property type="nucleotide sequence ID" value="XM_054326686.1"/>
</dbReference>
<dbReference type="RefSeq" id="XP_054182662.1">
    <molecule id="O60488-2"/>
    <property type="nucleotide sequence ID" value="XM_054326687.1"/>
</dbReference>
<dbReference type="RefSeq" id="XP_054182663.1">
    <molecule id="O60488-2"/>
    <property type="nucleotide sequence ID" value="XM_054326688.1"/>
</dbReference>
<dbReference type="RefSeq" id="XP_054182664.1">
    <molecule id="O60488-2"/>
    <property type="nucleotide sequence ID" value="XM_054326689.1"/>
</dbReference>
<dbReference type="SMR" id="O60488"/>
<dbReference type="BioGRID" id="108478">
    <property type="interactions" value="183"/>
</dbReference>
<dbReference type="FunCoup" id="O60488">
    <property type="interactions" value="2315"/>
</dbReference>
<dbReference type="IntAct" id="O60488">
    <property type="interactions" value="93"/>
</dbReference>
<dbReference type="MINT" id="O60488"/>
<dbReference type="STRING" id="9606.ENSP00000339787"/>
<dbReference type="BindingDB" id="O60488"/>
<dbReference type="ChEMBL" id="CHEMBL4680022"/>
<dbReference type="DrugBank" id="DB00159">
    <property type="generic name" value="Icosapent"/>
</dbReference>
<dbReference type="DrugBank" id="DB00412">
    <property type="generic name" value="Rosiglitazone"/>
</dbReference>
<dbReference type="DrugBank" id="DB00197">
    <property type="generic name" value="Troglitazone"/>
</dbReference>
<dbReference type="SwissLipids" id="SLP:000000201"/>
<dbReference type="SwissLipids" id="SLP:000000515">
    <molecule id="O60488-1"/>
</dbReference>
<dbReference type="SwissLipids" id="SLP:000000516">
    <molecule id="O60488-2"/>
</dbReference>
<dbReference type="TCDB" id="4.C.1.1.21">
    <property type="family name" value="the fatty acid group translocation (fat) family"/>
</dbReference>
<dbReference type="GlyGen" id="O60488">
    <property type="glycosylation" value="4 sites, 1 O-linked glycan (3 sites)"/>
</dbReference>
<dbReference type="iPTMnet" id="O60488"/>
<dbReference type="MetOSite" id="O60488"/>
<dbReference type="PhosphoSitePlus" id="O60488"/>
<dbReference type="SwissPalm" id="O60488"/>
<dbReference type="BioMuta" id="ACSL4"/>
<dbReference type="jPOST" id="O60488"/>
<dbReference type="MassIVE" id="O60488"/>
<dbReference type="PaxDb" id="9606-ENSP00000339787"/>
<dbReference type="PeptideAtlas" id="O60488"/>
<dbReference type="ProteomicsDB" id="49426">
    <molecule id="O60488-1"/>
</dbReference>
<dbReference type="ProteomicsDB" id="49427">
    <molecule id="O60488-2"/>
</dbReference>
<dbReference type="Pumba" id="O60488"/>
<dbReference type="Antibodypedia" id="444">
    <property type="antibodies" value="354 antibodies from 36 providers"/>
</dbReference>
<dbReference type="DNASU" id="2182"/>
<dbReference type="Ensembl" id="ENST00000340800.7">
    <molecule id="O60488-1"/>
    <property type="protein sequence ID" value="ENSP00000339787.2"/>
    <property type="gene ID" value="ENSG00000068366.21"/>
</dbReference>
<dbReference type="Ensembl" id="ENST00000348502.10">
    <molecule id="O60488-2"/>
    <property type="protein sequence ID" value="ENSP00000262835.7"/>
    <property type="gene ID" value="ENSG00000068366.21"/>
</dbReference>
<dbReference type="Ensembl" id="ENST00000469796.7">
    <molecule id="O60488-1"/>
    <property type="protein sequence ID" value="ENSP00000419171.2"/>
    <property type="gene ID" value="ENSG00000068366.21"/>
</dbReference>
<dbReference type="Ensembl" id="ENST00000502391.6">
    <molecule id="O60488-1"/>
    <property type="protein sequence ID" value="ENSP00000425408.2"/>
    <property type="gene ID" value="ENSG00000068366.21"/>
</dbReference>
<dbReference type="Ensembl" id="ENST00000671846.1">
    <molecule id="O60488-1"/>
    <property type="protein sequence ID" value="ENSP00000500897.1"/>
    <property type="gene ID" value="ENSG00000068366.21"/>
</dbReference>
<dbReference type="Ensembl" id="ENST00000672282.1">
    <molecule id="O60488-2"/>
    <property type="protein sequence ID" value="ENSP00000500678.1"/>
    <property type="gene ID" value="ENSG00000068366.21"/>
</dbReference>
<dbReference type="Ensembl" id="ENST00000672401.1">
    <molecule id="O60488-2"/>
    <property type="protein sequence ID" value="ENSP00000500273.1"/>
    <property type="gene ID" value="ENSG00000068366.21"/>
</dbReference>
<dbReference type="Ensembl" id="ENST00000673016.1">
    <molecule id="O60488-2"/>
    <property type="protein sequence ID" value="ENSP00000499969.1"/>
    <property type="gene ID" value="ENSG00000068366.21"/>
</dbReference>
<dbReference type="GeneID" id="2182"/>
<dbReference type="KEGG" id="hsa:2182"/>
<dbReference type="MANE-Select" id="ENST00000672401.1">
    <molecule id="O60488-2"/>
    <property type="protein sequence ID" value="ENSP00000500273.1"/>
    <property type="RefSeq nucleotide sequence ID" value="NM_001318510.2"/>
    <property type="RefSeq protein sequence ID" value="NP_001305439.1"/>
</dbReference>
<dbReference type="UCSC" id="uc004eoi.3">
    <molecule id="O60488-1"/>
    <property type="organism name" value="human"/>
</dbReference>
<dbReference type="AGR" id="HGNC:3571"/>
<dbReference type="CTD" id="2182"/>
<dbReference type="DisGeNET" id="2182"/>
<dbReference type="GeneCards" id="ACSL4"/>
<dbReference type="HGNC" id="HGNC:3571">
    <property type="gene designation" value="ACSL4"/>
</dbReference>
<dbReference type="HPA" id="ENSG00000068366">
    <property type="expression patterns" value="Low tissue specificity"/>
</dbReference>
<dbReference type="MalaCards" id="ACSL4"/>
<dbReference type="MIM" id="300157">
    <property type="type" value="gene"/>
</dbReference>
<dbReference type="MIM" id="300194">
    <property type="type" value="phenotype"/>
</dbReference>
<dbReference type="MIM" id="300387">
    <property type="type" value="phenotype"/>
</dbReference>
<dbReference type="neXtProt" id="NX_O60488"/>
<dbReference type="OpenTargets" id="ENSG00000068366"/>
<dbReference type="Orphanet" id="86818">
    <property type="disease" value="Alport syndrome-intellectual disability-midface hypoplasia-elliptocytosis syndrome"/>
</dbReference>
<dbReference type="Orphanet" id="777">
    <property type="disease" value="X-linked non-syndromic intellectual disability"/>
</dbReference>
<dbReference type="PharmGKB" id="PA27968"/>
<dbReference type="VEuPathDB" id="HostDB:ENSG00000068366"/>
<dbReference type="eggNOG" id="KOG1180">
    <property type="taxonomic scope" value="Eukaryota"/>
</dbReference>
<dbReference type="GeneTree" id="ENSGT00940000157427"/>
<dbReference type="HOGENOM" id="CLU_000022_45_2_1"/>
<dbReference type="InParanoid" id="O60488"/>
<dbReference type="OrthoDB" id="1700726at2759"/>
<dbReference type="PAN-GO" id="O60488">
    <property type="GO annotations" value="7 GO annotations based on evolutionary models"/>
</dbReference>
<dbReference type="PhylomeDB" id="O60488"/>
<dbReference type="TreeFam" id="TF314012"/>
<dbReference type="BioCyc" id="MetaCyc:HS00935-MONOMER"/>
<dbReference type="BRENDA" id="6.2.1.15">
    <property type="organism ID" value="2681"/>
</dbReference>
<dbReference type="BRENDA" id="6.2.1.3">
    <property type="organism ID" value="2681"/>
</dbReference>
<dbReference type="PathwayCommons" id="O60488"/>
<dbReference type="Reactome" id="R-HSA-434313">
    <property type="pathway name" value="Intracellular metabolism of fatty acids regulates insulin secretion"/>
</dbReference>
<dbReference type="Reactome" id="R-HSA-75876">
    <property type="pathway name" value="Synthesis of very long-chain fatty acyl-CoAs"/>
</dbReference>
<dbReference type="SignaLink" id="O60488"/>
<dbReference type="BioGRID-ORCS" id="2182">
    <property type="hits" value="88 hits in 803 CRISPR screens"/>
</dbReference>
<dbReference type="CD-CODE" id="FB4E32DD">
    <property type="entry name" value="Presynaptic clusters and postsynaptic densities"/>
</dbReference>
<dbReference type="ChiTaRS" id="ACSL4">
    <property type="organism name" value="human"/>
</dbReference>
<dbReference type="GeneWiki" id="ACSL4"/>
<dbReference type="GenomeRNAi" id="2182"/>
<dbReference type="Pharos" id="O60488">
    <property type="development level" value="Tbio"/>
</dbReference>
<dbReference type="PRO" id="PR:O60488"/>
<dbReference type="Proteomes" id="UP000005640">
    <property type="component" value="Chromosome X"/>
</dbReference>
<dbReference type="RNAct" id="O60488">
    <property type="molecule type" value="protein"/>
</dbReference>
<dbReference type="Bgee" id="ENSG00000068366">
    <property type="expression patterns" value="Expressed in adrenal tissue and 194 other cell types or tissues"/>
</dbReference>
<dbReference type="ExpressionAtlas" id="O60488">
    <property type="expression patterns" value="baseline and differential"/>
</dbReference>
<dbReference type="GO" id="GO:0005737">
    <property type="term" value="C:cytoplasm"/>
    <property type="evidence" value="ECO:0000314"/>
    <property type="project" value="UniProtKB"/>
</dbReference>
<dbReference type="GO" id="GO:0005783">
    <property type="term" value="C:endoplasmic reticulum"/>
    <property type="evidence" value="ECO:0000314"/>
    <property type="project" value="UniProtKB"/>
</dbReference>
<dbReference type="GO" id="GO:0005789">
    <property type="term" value="C:endoplasmic reticulum membrane"/>
    <property type="evidence" value="ECO:0000304"/>
    <property type="project" value="Reactome"/>
</dbReference>
<dbReference type="GO" id="GO:0070062">
    <property type="term" value="C:extracellular exosome"/>
    <property type="evidence" value="ECO:0007005"/>
    <property type="project" value="UniProtKB"/>
</dbReference>
<dbReference type="GO" id="GO:0005811">
    <property type="term" value="C:lipid droplet"/>
    <property type="evidence" value="ECO:0000314"/>
    <property type="project" value="UniProtKB"/>
</dbReference>
<dbReference type="GO" id="GO:0016020">
    <property type="term" value="C:membrane"/>
    <property type="evidence" value="ECO:0007005"/>
    <property type="project" value="UniProtKB"/>
</dbReference>
<dbReference type="GO" id="GO:0044233">
    <property type="term" value="C:mitochondria-associated endoplasmic reticulum membrane contact site"/>
    <property type="evidence" value="ECO:0000314"/>
    <property type="project" value="MGI"/>
</dbReference>
<dbReference type="GO" id="GO:0005741">
    <property type="term" value="C:mitochondrial outer membrane"/>
    <property type="evidence" value="ECO:0000304"/>
    <property type="project" value="Reactome"/>
</dbReference>
<dbReference type="GO" id="GO:0005739">
    <property type="term" value="C:mitochondrion"/>
    <property type="evidence" value="ECO:0006056"/>
    <property type="project" value="FlyBase"/>
</dbReference>
<dbReference type="GO" id="GO:0005778">
    <property type="term" value="C:peroxisomal membrane"/>
    <property type="evidence" value="ECO:0007669"/>
    <property type="project" value="UniProtKB-SubCell"/>
</dbReference>
<dbReference type="GO" id="GO:0005886">
    <property type="term" value="C:plasma membrane"/>
    <property type="evidence" value="ECO:0000314"/>
    <property type="project" value="UniProtKB"/>
</dbReference>
<dbReference type="GO" id="GO:0047676">
    <property type="term" value="F:arachidonate-CoA ligase activity"/>
    <property type="evidence" value="ECO:0000314"/>
    <property type="project" value="UniProtKB"/>
</dbReference>
<dbReference type="GO" id="GO:0005524">
    <property type="term" value="F:ATP binding"/>
    <property type="evidence" value="ECO:0007669"/>
    <property type="project" value="UniProtKB-KW"/>
</dbReference>
<dbReference type="GO" id="GO:0004467">
    <property type="term" value="F:long-chain fatty acid-CoA ligase activity"/>
    <property type="evidence" value="ECO:0000314"/>
    <property type="project" value="UniProtKB"/>
</dbReference>
<dbReference type="GO" id="GO:0090433">
    <property type="term" value="F:palmitoyl-CoA ligase activity"/>
    <property type="evidence" value="ECO:0000304"/>
    <property type="project" value="Reactome"/>
</dbReference>
<dbReference type="GO" id="GO:0031957">
    <property type="term" value="F:very long-chain fatty acid-CoA ligase activity"/>
    <property type="evidence" value="ECO:0000315"/>
    <property type="project" value="UniProtKB"/>
</dbReference>
<dbReference type="GO" id="GO:0036109">
    <property type="term" value="P:alpha-linolenic acid metabolic process"/>
    <property type="evidence" value="ECO:0007669"/>
    <property type="project" value="Ensembl"/>
</dbReference>
<dbReference type="GO" id="GO:0060136">
    <property type="term" value="P:embryonic process involved in female pregnancy"/>
    <property type="evidence" value="ECO:0007669"/>
    <property type="project" value="Ensembl"/>
</dbReference>
<dbReference type="GO" id="GO:0006631">
    <property type="term" value="P:fatty acid metabolic process"/>
    <property type="evidence" value="ECO:0000304"/>
    <property type="project" value="Reactome"/>
</dbReference>
<dbReference type="GO" id="GO:0008610">
    <property type="term" value="P:lipid biosynthetic process"/>
    <property type="evidence" value="ECO:0000314"/>
    <property type="project" value="UniProtKB"/>
</dbReference>
<dbReference type="GO" id="GO:0006629">
    <property type="term" value="P:lipid metabolic process"/>
    <property type="evidence" value="ECO:0000314"/>
    <property type="project" value="UniProtKB"/>
</dbReference>
<dbReference type="GO" id="GO:0042759">
    <property type="term" value="P:long-chain fatty acid biosynthetic process"/>
    <property type="evidence" value="ECO:0007669"/>
    <property type="project" value="Ensembl"/>
</dbReference>
<dbReference type="GO" id="GO:0001676">
    <property type="term" value="P:long-chain fatty acid metabolic process"/>
    <property type="evidence" value="ECO:0000314"/>
    <property type="project" value="UniProtKB"/>
</dbReference>
<dbReference type="GO" id="GO:0035338">
    <property type="term" value="P:long-chain fatty-acyl-CoA biosynthetic process"/>
    <property type="evidence" value="ECO:0000304"/>
    <property type="project" value="Reactome"/>
</dbReference>
<dbReference type="GO" id="GO:0035336">
    <property type="term" value="P:long-chain fatty-acyl-CoA metabolic process"/>
    <property type="evidence" value="ECO:0000318"/>
    <property type="project" value="GO_Central"/>
</dbReference>
<dbReference type="GO" id="GO:0032307">
    <property type="term" value="P:negative regulation of prostaglandin secretion"/>
    <property type="evidence" value="ECO:0000314"/>
    <property type="project" value="UniProtKB"/>
</dbReference>
<dbReference type="GO" id="GO:0030182">
    <property type="term" value="P:neuron differentiation"/>
    <property type="evidence" value="ECO:0000318"/>
    <property type="project" value="GO_Central"/>
</dbReference>
<dbReference type="GO" id="GO:0030307">
    <property type="term" value="P:positive regulation of cell growth"/>
    <property type="evidence" value="ECO:0000314"/>
    <property type="project" value="UniProtKB"/>
</dbReference>
<dbReference type="GO" id="GO:0032024">
    <property type="term" value="P:positive regulation of insulin secretion"/>
    <property type="evidence" value="ECO:0000250"/>
    <property type="project" value="UniProtKB"/>
</dbReference>
<dbReference type="GO" id="GO:0006636">
    <property type="term" value="P:unsaturated fatty acid biosynthetic process"/>
    <property type="evidence" value="ECO:0007669"/>
    <property type="project" value="Ensembl"/>
</dbReference>
<dbReference type="CDD" id="cd17639">
    <property type="entry name" value="LC_FACS_euk1"/>
    <property type="match status" value="1"/>
</dbReference>
<dbReference type="Gene3D" id="3.30.300.30">
    <property type="match status" value="1"/>
</dbReference>
<dbReference type="Gene3D" id="3.40.50.12780">
    <property type="entry name" value="N-terminal domain of ligase-like"/>
    <property type="match status" value="1"/>
</dbReference>
<dbReference type="InterPro" id="IPR045851">
    <property type="entry name" value="AMP-bd_C_sf"/>
</dbReference>
<dbReference type="InterPro" id="IPR020845">
    <property type="entry name" value="AMP-binding_CS"/>
</dbReference>
<dbReference type="InterPro" id="IPR000873">
    <property type="entry name" value="AMP-dep_synth/lig_dom"/>
</dbReference>
<dbReference type="InterPro" id="IPR042099">
    <property type="entry name" value="ANL_N_sf"/>
</dbReference>
<dbReference type="PANTHER" id="PTHR43272">
    <property type="entry name" value="LONG-CHAIN-FATTY-ACID--COA LIGASE"/>
    <property type="match status" value="1"/>
</dbReference>
<dbReference type="PANTHER" id="PTHR43272:SF22">
    <property type="entry name" value="LONG-CHAIN-FATTY-ACID--COA LIGASE 4"/>
    <property type="match status" value="1"/>
</dbReference>
<dbReference type="Pfam" id="PF00501">
    <property type="entry name" value="AMP-binding"/>
    <property type="match status" value="1"/>
</dbReference>
<dbReference type="SUPFAM" id="SSF56801">
    <property type="entry name" value="Acetyl-CoA synthetase-like"/>
    <property type="match status" value="1"/>
</dbReference>
<dbReference type="PROSITE" id="PS00455">
    <property type="entry name" value="AMP_BINDING"/>
    <property type="match status" value="1"/>
</dbReference>
<name>ACSL4_HUMAN</name>
<sequence>MKLKLNVLTIILLPVHLLITIYSALIFIPWYFLTNAKKKNAMAKRIKAKPTSDKPGSPYRSVTHFDSLAVIDIPGADTLDKLFDHAVSKFGKKDSLGTREILSEENEMQPNGKVFKKLILGNYKWMNYLEVNRRVNNFGSGLTALGLKPKNTIAIFCETRAEWMIAAQTCFKYNFPLVTLYATLGKEAVVHGLNESEASYLITSVELLESKLKTALLDISCVKHIIYVDNKAINKAEYPEGFEIHSMQSVEELGSNPENLGIPPSRPTPSDMAIVMYTSGSTGRPKGVMMHHSNLIAGMTGQCERIPGLGPKDTYIGYLPLAHVLELTAEISCFTYGCRIGYSSPLTLSDQSSKIKKGSKGDCTVLKPTLMAAVPEIMDRIYKNVMSKVQEMNYIQKTLFKIGYDYKLEQIKKGYDAPLCNLLLFKKVKALLGGNVRMMLSGGAPLSPQTHRFMNVCFCCPIGQGYGLTESCGAGTVTEVTDYTTGRVGAPLICCEIKLKDWQEGGYTINDKPNPRGEIVIGGQNISMGYFKNEEKTAEDYSVDENGQRWFCTGDIGEFHPDGCLQIIDRKKDLVKLQAGEYVSLGKVEAALKNCPLIDNICAFAKSDQSYVISFVVPNQKRLTLLAQQKGVEGTWVDICNNPAMEAEILKEIREAANAMKLERFEIPIKVRLSPEPWTPETGLVTDAFKLKRKELRNHYLKDIERMYGGK</sequence>
<feature type="chain" id="PRO_0000193109" description="Long-chain-fatty-acid--CoA ligase 4">
    <location>
        <begin position="1"/>
        <end position="711"/>
    </location>
</feature>
<feature type="transmembrane region" description="Helical; Signal-anchor for type III membrane protein" evidence="3">
    <location>
        <begin position="8"/>
        <end position="28"/>
    </location>
</feature>
<feature type="topological domain" description="Cytoplasmic" evidence="3">
    <location>
        <begin position="29"/>
        <end position="711"/>
    </location>
</feature>
<feature type="modified residue" description="Phosphoserine" evidence="16">
    <location>
        <position position="447"/>
    </location>
</feature>
<feature type="splice variant" id="VSP_000238" description="In isoform Short." evidence="11 12 13 14">
    <location>
        <begin position="1"/>
        <end position="41"/>
    </location>
</feature>
<feature type="sequence variant" id="VAR_036376" description="In a colorectal cancer sample; somatic mutation; dbSNP:rs753267653." evidence="5">
    <original>R</original>
    <variation>C</variation>
    <location>
        <position position="133"/>
    </location>
</feature>
<feature type="sequence variant" id="VAR_083476" evidence="9">
    <original>D</original>
    <variation>N</variation>
    <location>
        <position position="379"/>
    </location>
</feature>
<feature type="sequence variant" id="VAR_013180" description="In XLID63; dbSNP:rs122458138." evidence="4">
    <original>R</original>
    <variation>S</variation>
    <location>
        <position position="570"/>
    </location>
</feature>
<feature type="sequence conflict" description="In Ref. 2; CAA73314." evidence="15" ref="2">
    <original>Y</original>
    <variation>C</variation>
    <location>
        <position position="181"/>
    </location>
</feature>
<proteinExistence type="evidence at protein level"/>
<organism>
    <name type="scientific">Homo sapiens</name>
    <name type="common">Human</name>
    <dbReference type="NCBI Taxonomy" id="9606"/>
    <lineage>
        <taxon>Eukaryota</taxon>
        <taxon>Metazoa</taxon>
        <taxon>Chordata</taxon>
        <taxon>Craniata</taxon>
        <taxon>Vertebrata</taxon>
        <taxon>Euteleostomi</taxon>
        <taxon>Mammalia</taxon>
        <taxon>Eutheria</taxon>
        <taxon>Euarchontoglires</taxon>
        <taxon>Primates</taxon>
        <taxon>Haplorrhini</taxon>
        <taxon>Catarrhini</taxon>
        <taxon>Hominidae</taxon>
        <taxon>Homo</taxon>
    </lineage>
</organism>